<dbReference type="EMBL" id="CP000034">
    <property type="protein sequence ID" value="ABB60254.1"/>
    <property type="molecule type" value="Genomic_DNA"/>
</dbReference>
<dbReference type="RefSeq" id="WP_001118468.1">
    <property type="nucleotide sequence ID" value="NC_007606.1"/>
</dbReference>
<dbReference type="RefSeq" id="YP_401742.1">
    <property type="nucleotide sequence ID" value="NC_007606.1"/>
</dbReference>
<dbReference type="SMR" id="Q32KA4"/>
<dbReference type="STRING" id="300267.SDY_0014"/>
<dbReference type="EnsemblBacteria" id="ABB60254">
    <property type="protein sequence ID" value="ABB60254"/>
    <property type="gene ID" value="SDY_0014"/>
</dbReference>
<dbReference type="KEGG" id="sdy:SDY_0014"/>
<dbReference type="PATRIC" id="fig|300267.13.peg.14"/>
<dbReference type="HOGENOM" id="CLU_017633_0_7_6"/>
<dbReference type="Proteomes" id="UP000002716">
    <property type="component" value="Chromosome"/>
</dbReference>
<dbReference type="GO" id="GO:0005737">
    <property type="term" value="C:cytoplasm"/>
    <property type="evidence" value="ECO:0007669"/>
    <property type="project" value="UniProtKB-SubCell"/>
</dbReference>
<dbReference type="GO" id="GO:0005524">
    <property type="term" value="F:ATP binding"/>
    <property type="evidence" value="ECO:0007669"/>
    <property type="project" value="InterPro"/>
</dbReference>
<dbReference type="GO" id="GO:0031072">
    <property type="term" value="F:heat shock protein binding"/>
    <property type="evidence" value="ECO:0007669"/>
    <property type="project" value="InterPro"/>
</dbReference>
<dbReference type="GO" id="GO:0051082">
    <property type="term" value="F:unfolded protein binding"/>
    <property type="evidence" value="ECO:0007669"/>
    <property type="project" value="UniProtKB-UniRule"/>
</dbReference>
<dbReference type="GO" id="GO:0008270">
    <property type="term" value="F:zinc ion binding"/>
    <property type="evidence" value="ECO:0007669"/>
    <property type="project" value="UniProtKB-UniRule"/>
</dbReference>
<dbReference type="GO" id="GO:0051085">
    <property type="term" value="P:chaperone cofactor-dependent protein refolding"/>
    <property type="evidence" value="ECO:0007669"/>
    <property type="project" value="TreeGrafter"/>
</dbReference>
<dbReference type="GO" id="GO:0006260">
    <property type="term" value="P:DNA replication"/>
    <property type="evidence" value="ECO:0007669"/>
    <property type="project" value="UniProtKB-KW"/>
</dbReference>
<dbReference type="GO" id="GO:0042026">
    <property type="term" value="P:protein refolding"/>
    <property type="evidence" value="ECO:0007669"/>
    <property type="project" value="TreeGrafter"/>
</dbReference>
<dbReference type="GO" id="GO:0009408">
    <property type="term" value="P:response to heat"/>
    <property type="evidence" value="ECO:0007669"/>
    <property type="project" value="InterPro"/>
</dbReference>
<dbReference type="CDD" id="cd06257">
    <property type="entry name" value="DnaJ"/>
    <property type="match status" value="1"/>
</dbReference>
<dbReference type="CDD" id="cd10747">
    <property type="entry name" value="DnaJ_C"/>
    <property type="match status" value="1"/>
</dbReference>
<dbReference type="CDD" id="cd10719">
    <property type="entry name" value="DnaJ_zf"/>
    <property type="match status" value="1"/>
</dbReference>
<dbReference type="FunFam" id="1.10.287.110:FF:000003">
    <property type="entry name" value="Molecular chaperone DnaJ"/>
    <property type="match status" value="1"/>
</dbReference>
<dbReference type="FunFam" id="2.10.230.10:FF:000002">
    <property type="entry name" value="Molecular chaperone DnaJ"/>
    <property type="match status" value="1"/>
</dbReference>
<dbReference type="FunFam" id="2.60.260.20:FF:000004">
    <property type="entry name" value="Molecular chaperone DnaJ"/>
    <property type="match status" value="1"/>
</dbReference>
<dbReference type="Gene3D" id="1.10.287.110">
    <property type="entry name" value="DnaJ domain"/>
    <property type="match status" value="1"/>
</dbReference>
<dbReference type="Gene3D" id="2.10.230.10">
    <property type="entry name" value="Heat shock protein DnaJ, cysteine-rich domain"/>
    <property type="match status" value="1"/>
</dbReference>
<dbReference type="Gene3D" id="2.60.260.20">
    <property type="entry name" value="Urease metallochaperone UreE, N-terminal domain"/>
    <property type="match status" value="2"/>
</dbReference>
<dbReference type="HAMAP" id="MF_01152">
    <property type="entry name" value="DnaJ"/>
    <property type="match status" value="1"/>
</dbReference>
<dbReference type="InterPro" id="IPR012724">
    <property type="entry name" value="DnaJ"/>
</dbReference>
<dbReference type="InterPro" id="IPR002939">
    <property type="entry name" value="DnaJ_C"/>
</dbReference>
<dbReference type="InterPro" id="IPR001623">
    <property type="entry name" value="DnaJ_domain"/>
</dbReference>
<dbReference type="InterPro" id="IPR018253">
    <property type="entry name" value="DnaJ_domain_CS"/>
</dbReference>
<dbReference type="InterPro" id="IPR008971">
    <property type="entry name" value="HSP40/DnaJ_pept-bd"/>
</dbReference>
<dbReference type="InterPro" id="IPR001305">
    <property type="entry name" value="HSP_DnaJ_Cys-rich_dom"/>
</dbReference>
<dbReference type="InterPro" id="IPR036410">
    <property type="entry name" value="HSP_DnaJ_Cys-rich_dom_sf"/>
</dbReference>
<dbReference type="InterPro" id="IPR036869">
    <property type="entry name" value="J_dom_sf"/>
</dbReference>
<dbReference type="NCBIfam" id="TIGR02349">
    <property type="entry name" value="DnaJ_bact"/>
    <property type="match status" value="1"/>
</dbReference>
<dbReference type="NCBIfam" id="NF008035">
    <property type="entry name" value="PRK10767.1"/>
    <property type="match status" value="1"/>
</dbReference>
<dbReference type="PANTHER" id="PTHR43096:SF48">
    <property type="entry name" value="CHAPERONE PROTEIN DNAJ"/>
    <property type="match status" value="1"/>
</dbReference>
<dbReference type="PANTHER" id="PTHR43096">
    <property type="entry name" value="DNAJ HOMOLOG 1, MITOCHONDRIAL-RELATED"/>
    <property type="match status" value="1"/>
</dbReference>
<dbReference type="Pfam" id="PF00226">
    <property type="entry name" value="DnaJ"/>
    <property type="match status" value="1"/>
</dbReference>
<dbReference type="Pfam" id="PF01556">
    <property type="entry name" value="DnaJ_C"/>
    <property type="match status" value="1"/>
</dbReference>
<dbReference type="Pfam" id="PF00684">
    <property type="entry name" value="DnaJ_CXXCXGXG"/>
    <property type="match status" value="1"/>
</dbReference>
<dbReference type="PRINTS" id="PR00625">
    <property type="entry name" value="JDOMAIN"/>
</dbReference>
<dbReference type="SMART" id="SM00271">
    <property type="entry name" value="DnaJ"/>
    <property type="match status" value="1"/>
</dbReference>
<dbReference type="SUPFAM" id="SSF46565">
    <property type="entry name" value="Chaperone J-domain"/>
    <property type="match status" value="1"/>
</dbReference>
<dbReference type="SUPFAM" id="SSF57938">
    <property type="entry name" value="DnaJ/Hsp40 cysteine-rich domain"/>
    <property type="match status" value="1"/>
</dbReference>
<dbReference type="SUPFAM" id="SSF49493">
    <property type="entry name" value="HSP40/DnaJ peptide-binding domain"/>
    <property type="match status" value="2"/>
</dbReference>
<dbReference type="PROSITE" id="PS00636">
    <property type="entry name" value="DNAJ_1"/>
    <property type="match status" value="1"/>
</dbReference>
<dbReference type="PROSITE" id="PS50076">
    <property type="entry name" value="DNAJ_2"/>
    <property type="match status" value="1"/>
</dbReference>
<dbReference type="PROSITE" id="PS51188">
    <property type="entry name" value="ZF_CR"/>
    <property type="match status" value="1"/>
</dbReference>
<keyword id="KW-0143">Chaperone</keyword>
<keyword id="KW-0963">Cytoplasm</keyword>
<keyword id="KW-0235">DNA replication</keyword>
<keyword id="KW-0479">Metal-binding</keyword>
<keyword id="KW-1185">Reference proteome</keyword>
<keyword id="KW-0677">Repeat</keyword>
<keyword id="KW-0346">Stress response</keyword>
<keyword id="KW-0862">Zinc</keyword>
<keyword id="KW-0863">Zinc-finger</keyword>
<protein>
    <recommendedName>
        <fullName evidence="1">Chaperone protein DnaJ</fullName>
    </recommendedName>
</protein>
<proteinExistence type="inferred from homology"/>
<gene>
    <name evidence="1" type="primary">dnaJ</name>
    <name type="ordered locus">SDY_0014</name>
</gene>
<reference key="1">
    <citation type="journal article" date="2005" name="Nucleic Acids Res.">
        <title>Genome dynamics and diversity of Shigella species, the etiologic agents of bacillary dysentery.</title>
        <authorList>
            <person name="Yang F."/>
            <person name="Yang J."/>
            <person name="Zhang X."/>
            <person name="Chen L."/>
            <person name="Jiang Y."/>
            <person name="Yan Y."/>
            <person name="Tang X."/>
            <person name="Wang J."/>
            <person name="Xiong Z."/>
            <person name="Dong J."/>
            <person name="Xue Y."/>
            <person name="Zhu Y."/>
            <person name="Xu X."/>
            <person name="Sun L."/>
            <person name="Chen S."/>
            <person name="Nie H."/>
            <person name="Peng J."/>
            <person name="Xu J."/>
            <person name="Wang Y."/>
            <person name="Yuan Z."/>
            <person name="Wen Y."/>
            <person name="Yao Z."/>
            <person name="Shen Y."/>
            <person name="Qiang B."/>
            <person name="Hou Y."/>
            <person name="Yu J."/>
            <person name="Jin Q."/>
        </authorList>
    </citation>
    <scope>NUCLEOTIDE SEQUENCE [LARGE SCALE GENOMIC DNA]</scope>
    <source>
        <strain>Sd197</strain>
    </source>
</reference>
<name>DNAJ_SHIDS</name>
<evidence type="ECO:0000255" key="1">
    <source>
        <dbReference type="HAMAP-Rule" id="MF_01152"/>
    </source>
</evidence>
<feature type="chain" id="PRO_1000085302" description="Chaperone protein DnaJ">
    <location>
        <begin position="1"/>
        <end position="376"/>
    </location>
</feature>
<feature type="domain" description="J" evidence="1">
    <location>
        <begin position="5"/>
        <end position="70"/>
    </location>
</feature>
<feature type="repeat" description="CXXCXGXG motif">
    <location>
        <begin position="144"/>
        <end position="151"/>
    </location>
</feature>
<feature type="repeat" description="CXXCXGXG motif">
    <location>
        <begin position="161"/>
        <end position="168"/>
    </location>
</feature>
<feature type="repeat" description="CXXCXGXG motif">
    <location>
        <begin position="183"/>
        <end position="190"/>
    </location>
</feature>
<feature type="repeat" description="CXXCXGXG motif">
    <location>
        <begin position="197"/>
        <end position="204"/>
    </location>
</feature>
<feature type="zinc finger region" description="CR-type" evidence="1">
    <location>
        <begin position="131"/>
        <end position="209"/>
    </location>
</feature>
<feature type="binding site" evidence="1">
    <location>
        <position position="144"/>
    </location>
    <ligand>
        <name>Zn(2+)</name>
        <dbReference type="ChEBI" id="CHEBI:29105"/>
        <label>1</label>
    </ligand>
</feature>
<feature type="binding site" evidence="1">
    <location>
        <position position="147"/>
    </location>
    <ligand>
        <name>Zn(2+)</name>
        <dbReference type="ChEBI" id="CHEBI:29105"/>
        <label>1</label>
    </ligand>
</feature>
<feature type="binding site" evidence="1">
    <location>
        <position position="161"/>
    </location>
    <ligand>
        <name>Zn(2+)</name>
        <dbReference type="ChEBI" id="CHEBI:29105"/>
        <label>2</label>
    </ligand>
</feature>
<feature type="binding site" evidence="1">
    <location>
        <position position="164"/>
    </location>
    <ligand>
        <name>Zn(2+)</name>
        <dbReference type="ChEBI" id="CHEBI:29105"/>
        <label>2</label>
    </ligand>
</feature>
<feature type="binding site" evidence="1">
    <location>
        <position position="183"/>
    </location>
    <ligand>
        <name>Zn(2+)</name>
        <dbReference type="ChEBI" id="CHEBI:29105"/>
        <label>2</label>
    </ligand>
</feature>
<feature type="binding site" evidence="1">
    <location>
        <position position="186"/>
    </location>
    <ligand>
        <name>Zn(2+)</name>
        <dbReference type="ChEBI" id="CHEBI:29105"/>
        <label>2</label>
    </ligand>
</feature>
<feature type="binding site" evidence="1">
    <location>
        <position position="197"/>
    </location>
    <ligand>
        <name>Zn(2+)</name>
        <dbReference type="ChEBI" id="CHEBI:29105"/>
        <label>1</label>
    </ligand>
</feature>
<feature type="binding site" evidence="1">
    <location>
        <position position="200"/>
    </location>
    <ligand>
        <name>Zn(2+)</name>
        <dbReference type="ChEBI" id="CHEBI:29105"/>
        <label>1</label>
    </ligand>
</feature>
<sequence>MAKQDYYEILGVSKTAEEREIKKAYKRLAMKYHPDRNQGDKEAEAKFKEIKEAYEVLTDSQKRAAYDQYGHAAFEQGGMGGGGFGGGADFSDIFGDVFGDIFGGGRGRQRAARGADLRYNMELTLEEAVRGVTKEIRIPTLEECDVCHGSGAKPGTQPQTCPTCHGSGQVQMRQGFFAVQQTCPHCQGRGTLIKDPCNKCHGHGRVERSKTLSVKIPAGVDTGDRIRLAGEGEVGEHGAPAGDLYVQVQVKQHPIFEREGNNLYCEVPINFAMAALGGEIEVPTLDGRVKLKVPGETQTGKLFRMRGKGVKSVRGGAQGDLLCRVVVETPVGLNEKQKQLLQELQESFGGPTGEHNSPRSKSFFDGVKKFFDDLTR</sequence>
<comment type="function">
    <text evidence="1">Participates actively in the response to hyperosmotic and heat shock by preventing the aggregation of stress-denatured proteins and by disaggregating proteins, also in an autonomous, DnaK-independent fashion. Unfolded proteins bind initially to DnaJ; upon interaction with the DnaJ-bound protein, DnaK hydrolyzes its bound ATP, resulting in the formation of a stable complex. GrpE releases ADP from DnaK; ATP binding to DnaK triggers the release of the substrate protein, thus completing the reaction cycle. Several rounds of ATP-dependent interactions between DnaJ, DnaK and GrpE are required for fully efficient folding. Also involved, together with DnaK and GrpE, in the DNA replication of plasmids through activation of initiation proteins.</text>
</comment>
<comment type="cofactor">
    <cofactor evidence="1">
        <name>Zn(2+)</name>
        <dbReference type="ChEBI" id="CHEBI:29105"/>
    </cofactor>
    <text evidence="1">Binds 2 Zn(2+) ions per monomer.</text>
</comment>
<comment type="subunit">
    <text evidence="1">Homodimer.</text>
</comment>
<comment type="subcellular location">
    <subcellularLocation>
        <location evidence="1">Cytoplasm</location>
    </subcellularLocation>
</comment>
<comment type="domain">
    <text evidence="1">The J domain is necessary and sufficient to stimulate DnaK ATPase activity. Zinc center 1 plays an important role in the autonomous, DnaK-independent chaperone activity of DnaJ. Zinc center 2 is essential for interaction with DnaK and for DnaJ activity.</text>
</comment>
<comment type="similarity">
    <text evidence="1">Belongs to the DnaJ family.</text>
</comment>
<organism>
    <name type="scientific">Shigella dysenteriae serotype 1 (strain Sd197)</name>
    <dbReference type="NCBI Taxonomy" id="300267"/>
    <lineage>
        <taxon>Bacteria</taxon>
        <taxon>Pseudomonadati</taxon>
        <taxon>Pseudomonadota</taxon>
        <taxon>Gammaproteobacteria</taxon>
        <taxon>Enterobacterales</taxon>
        <taxon>Enterobacteriaceae</taxon>
        <taxon>Shigella</taxon>
    </lineage>
</organism>
<accession>Q32KA4</accession>